<comment type="function">
    <text evidence="1">Catalyzes the specific phosphorylation of the 3-hydroxyl group of shikimic acid using ATP as a cosubstrate.</text>
</comment>
<comment type="catalytic activity">
    <reaction evidence="1">
        <text>shikimate + ATP = 3-phosphoshikimate + ADP + H(+)</text>
        <dbReference type="Rhea" id="RHEA:13121"/>
        <dbReference type="ChEBI" id="CHEBI:15378"/>
        <dbReference type="ChEBI" id="CHEBI:30616"/>
        <dbReference type="ChEBI" id="CHEBI:36208"/>
        <dbReference type="ChEBI" id="CHEBI:145989"/>
        <dbReference type="ChEBI" id="CHEBI:456216"/>
        <dbReference type="EC" id="2.7.1.71"/>
    </reaction>
</comment>
<comment type="cofactor">
    <cofactor evidence="1">
        <name>Mg(2+)</name>
        <dbReference type="ChEBI" id="CHEBI:18420"/>
    </cofactor>
    <text evidence="1">Binds 1 Mg(2+) ion per subunit.</text>
</comment>
<comment type="pathway">
    <text evidence="1">Metabolic intermediate biosynthesis; chorismate biosynthesis; chorismate from D-erythrose 4-phosphate and phosphoenolpyruvate: step 5/7.</text>
</comment>
<comment type="subunit">
    <text evidence="1">Monomer.</text>
</comment>
<comment type="subcellular location">
    <subcellularLocation>
        <location evidence="1">Cytoplasm</location>
    </subcellularLocation>
</comment>
<comment type="similarity">
    <text evidence="1">Belongs to the shikimate kinase family.</text>
</comment>
<accession>Q2S9Q5</accession>
<evidence type="ECO:0000255" key="1">
    <source>
        <dbReference type="HAMAP-Rule" id="MF_00109"/>
    </source>
</evidence>
<dbReference type="EC" id="2.7.1.71" evidence="1"/>
<dbReference type="EMBL" id="CP000155">
    <property type="protein sequence ID" value="ABC32619.1"/>
    <property type="molecule type" value="Genomic_DNA"/>
</dbReference>
<dbReference type="RefSeq" id="WP_011399677.1">
    <property type="nucleotide sequence ID" value="NC_007645.1"/>
</dbReference>
<dbReference type="SMR" id="Q2S9Q5"/>
<dbReference type="STRING" id="349521.HCH_05968"/>
<dbReference type="KEGG" id="hch:HCH_05968"/>
<dbReference type="eggNOG" id="COG0703">
    <property type="taxonomic scope" value="Bacteria"/>
</dbReference>
<dbReference type="HOGENOM" id="CLU_057607_2_2_6"/>
<dbReference type="OrthoDB" id="9800332at2"/>
<dbReference type="UniPathway" id="UPA00053">
    <property type="reaction ID" value="UER00088"/>
</dbReference>
<dbReference type="Proteomes" id="UP000000238">
    <property type="component" value="Chromosome"/>
</dbReference>
<dbReference type="GO" id="GO:0005829">
    <property type="term" value="C:cytosol"/>
    <property type="evidence" value="ECO:0007669"/>
    <property type="project" value="TreeGrafter"/>
</dbReference>
<dbReference type="GO" id="GO:0005524">
    <property type="term" value="F:ATP binding"/>
    <property type="evidence" value="ECO:0007669"/>
    <property type="project" value="UniProtKB-UniRule"/>
</dbReference>
<dbReference type="GO" id="GO:0000287">
    <property type="term" value="F:magnesium ion binding"/>
    <property type="evidence" value="ECO:0007669"/>
    <property type="project" value="UniProtKB-UniRule"/>
</dbReference>
<dbReference type="GO" id="GO:0004765">
    <property type="term" value="F:shikimate kinase activity"/>
    <property type="evidence" value="ECO:0007669"/>
    <property type="project" value="UniProtKB-UniRule"/>
</dbReference>
<dbReference type="GO" id="GO:0008652">
    <property type="term" value="P:amino acid biosynthetic process"/>
    <property type="evidence" value="ECO:0007669"/>
    <property type="project" value="UniProtKB-KW"/>
</dbReference>
<dbReference type="GO" id="GO:0009073">
    <property type="term" value="P:aromatic amino acid family biosynthetic process"/>
    <property type="evidence" value="ECO:0007669"/>
    <property type="project" value="UniProtKB-KW"/>
</dbReference>
<dbReference type="GO" id="GO:0009423">
    <property type="term" value="P:chorismate biosynthetic process"/>
    <property type="evidence" value="ECO:0007669"/>
    <property type="project" value="UniProtKB-UniRule"/>
</dbReference>
<dbReference type="CDD" id="cd00464">
    <property type="entry name" value="SK"/>
    <property type="match status" value="1"/>
</dbReference>
<dbReference type="Gene3D" id="3.40.50.300">
    <property type="entry name" value="P-loop containing nucleotide triphosphate hydrolases"/>
    <property type="match status" value="1"/>
</dbReference>
<dbReference type="HAMAP" id="MF_00109">
    <property type="entry name" value="Shikimate_kinase"/>
    <property type="match status" value="1"/>
</dbReference>
<dbReference type="InterPro" id="IPR027417">
    <property type="entry name" value="P-loop_NTPase"/>
</dbReference>
<dbReference type="InterPro" id="IPR031322">
    <property type="entry name" value="Shikimate/glucono_kinase"/>
</dbReference>
<dbReference type="InterPro" id="IPR000623">
    <property type="entry name" value="Shikimate_kinase/TSH1"/>
</dbReference>
<dbReference type="InterPro" id="IPR023000">
    <property type="entry name" value="Shikimate_kinase_CS"/>
</dbReference>
<dbReference type="NCBIfam" id="NF003456">
    <property type="entry name" value="PRK05057.1"/>
    <property type="match status" value="1"/>
</dbReference>
<dbReference type="PANTHER" id="PTHR21087">
    <property type="entry name" value="SHIKIMATE KINASE"/>
    <property type="match status" value="1"/>
</dbReference>
<dbReference type="PANTHER" id="PTHR21087:SF16">
    <property type="entry name" value="SHIKIMATE KINASE 1, CHLOROPLASTIC"/>
    <property type="match status" value="1"/>
</dbReference>
<dbReference type="Pfam" id="PF01202">
    <property type="entry name" value="SKI"/>
    <property type="match status" value="1"/>
</dbReference>
<dbReference type="PRINTS" id="PR01100">
    <property type="entry name" value="SHIKIMTKNASE"/>
</dbReference>
<dbReference type="SUPFAM" id="SSF52540">
    <property type="entry name" value="P-loop containing nucleoside triphosphate hydrolases"/>
    <property type="match status" value="1"/>
</dbReference>
<dbReference type="PROSITE" id="PS01128">
    <property type="entry name" value="SHIKIMATE_KINASE"/>
    <property type="match status" value="1"/>
</dbReference>
<name>AROK_HAHCH</name>
<proteinExistence type="inferred from homology"/>
<reference key="1">
    <citation type="journal article" date="2005" name="Nucleic Acids Res.">
        <title>Genomic blueprint of Hahella chejuensis, a marine microbe producing an algicidal agent.</title>
        <authorList>
            <person name="Jeong H."/>
            <person name="Yim J.H."/>
            <person name="Lee C."/>
            <person name="Choi S.-H."/>
            <person name="Park Y.K."/>
            <person name="Yoon S.H."/>
            <person name="Hur C.-G."/>
            <person name="Kang H.-Y."/>
            <person name="Kim D."/>
            <person name="Lee H.H."/>
            <person name="Park K.H."/>
            <person name="Park S.-H."/>
            <person name="Park H.-S."/>
            <person name="Lee H.K."/>
            <person name="Oh T.K."/>
            <person name="Kim J.F."/>
        </authorList>
    </citation>
    <scope>NUCLEOTIDE SEQUENCE [LARGE SCALE GENOMIC DNA]</scope>
    <source>
        <strain>KCTC 2396</strain>
    </source>
</reference>
<gene>
    <name evidence="1" type="primary">aroK</name>
    <name type="ordered locus">HCH_05968</name>
</gene>
<protein>
    <recommendedName>
        <fullName evidence="1">Shikimate kinase</fullName>
        <shortName evidence="1">SK</shortName>
        <ecNumber evidence="1">2.7.1.71</ecNumber>
    </recommendedName>
</protein>
<keyword id="KW-0028">Amino-acid biosynthesis</keyword>
<keyword id="KW-0057">Aromatic amino acid biosynthesis</keyword>
<keyword id="KW-0067">ATP-binding</keyword>
<keyword id="KW-0963">Cytoplasm</keyword>
<keyword id="KW-0418">Kinase</keyword>
<keyword id="KW-0460">Magnesium</keyword>
<keyword id="KW-0479">Metal-binding</keyword>
<keyword id="KW-0547">Nucleotide-binding</keyword>
<keyword id="KW-1185">Reference proteome</keyword>
<keyword id="KW-0808">Transferase</keyword>
<feature type="chain" id="PRO_0000237887" description="Shikimate kinase">
    <location>
        <begin position="1"/>
        <end position="192"/>
    </location>
</feature>
<feature type="binding site" evidence="1">
    <location>
        <begin position="27"/>
        <end position="32"/>
    </location>
    <ligand>
        <name>ATP</name>
        <dbReference type="ChEBI" id="CHEBI:30616"/>
    </ligand>
</feature>
<feature type="binding site" evidence="1">
    <location>
        <position position="31"/>
    </location>
    <ligand>
        <name>Mg(2+)</name>
        <dbReference type="ChEBI" id="CHEBI:18420"/>
    </ligand>
</feature>
<feature type="binding site" evidence="1">
    <location>
        <position position="49"/>
    </location>
    <ligand>
        <name>substrate</name>
    </ligand>
</feature>
<feature type="binding site" evidence="1">
    <location>
        <position position="73"/>
    </location>
    <ligand>
        <name>substrate</name>
    </ligand>
</feature>
<feature type="binding site" evidence="1">
    <location>
        <position position="95"/>
    </location>
    <ligand>
        <name>substrate</name>
    </ligand>
</feature>
<feature type="binding site" evidence="1">
    <location>
        <position position="133"/>
    </location>
    <ligand>
        <name>ATP</name>
        <dbReference type="ChEBI" id="CHEBI:30616"/>
    </ligand>
</feature>
<feature type="binding site" evidence="1">
    <location>
        <position position="152"/>
    </location>
    <ligand>
        <name>substrate</name>
    </ligand>
</feature>
<organism>
    <name type="scientific">Hahella chejuensis (strain KCTC 2396)</name>
    <dbReference type="NCBI Taxonomy" id="349521"/>
    <lineage>
        <taxon>Bacteria</taxon>
        <taxon>Pseudomonadati</taxon>
        <taxon>Pseudomonadota</taxon>
        <taxon>Gammaproteobacteria</taxon>
        <taxon>Oceanospirillales</taxon>
        <taxon>Hahellaceae</taxon>
        <taxon>Hahella</taxon>
    </lineage>
</organism>
<sequence>MLRYRGVSIWTVRVKAKKNVVLVGPMGTGKTTIGKLLAKELQFEFVDSDREIEARCGADIPWIFDVEGEVGFRGREKSVIADLSQRDAVVIATGGGAVVDPDNQIALKENGFIVYLHTSVEQQYQRTRKDRKRPLLRSEDPLSVLKKLMSVREPIYRSIADLIISTDSKRPKGVVRDIVKTLRASREETVER</sequence>